<accession>P68056</accession>
<accession>P02079</accession>
<proteinExistence type="evidence at protein level"/>
<evidence type="ECO:0000255" key="1">
    <source>
        <dbReference type="PROSITE-ProRule" id="PRU00238"/>
    </source>
</evidence>
<evidence type="ECO:0000269" key="2">
    <source>
    </source>
</evidence>
<evidence type="ECO:0000269" key="3">
    <source ref="2"/>
</evidence>
<evidence type="ECO:0000305" key="4"/>
<protein>
    <recommendedName>
        <fullName>Hemoglobin subunit beta-C</fullName>
    </recommendedName>
    <alternativeName>
        <fullName>Beta-C-globin</fullName>
    </alternativeName>
    <alternativeName>
        <fullName>Hemoglobin beta-C chain</fullName>
    </alternativeName>
</protein>
<organism>
    <name type="scientific">Ovis aries</name>
    <name type="common">Sheep</name>
    <dbReference type="NCBI Taxonomy" id="9940"/>
    <lineage>
        <taxon>Eukaryota</taxon>
        <taxon>Metazoa</taxon>
        <taxon>Chordata</taxon>
        <taxon>Craniata</taxon>
        <taxon>Vertebrata</taxon>
        <taxon>Euteleostomi</taxon>
        <taxon>Mammalia</taxon>
        <taxon>Eutheria</taxon>
        <taxon>Laurasiatheria</taxon>
        <taxon>Artiodactyla</taxon>
        <taxon>Ruminantia</taxon>
        <taxon>Pecora</taxon>
        <taxon>Bovidae</taxon>
        <taxon>Caprinae</taxon>
        <taxon>Ovis</taxon>
    </lineage>
</organism>
<feature type="initiator methionine" description="Removed" evidence="2 3">
    <location>
        <position position="1"/>
    </location>
</feature>
<feature type="chain" id="PRO_0000053106" description="Hemoglobin subunit beta-C">
    <location>
        <begin position="2"/>
        <end position="142"/>
    </location>
</feature>
<feature type="domain" description="Globin" evidence="1">
    <location>
        <begin position="2"/>
        <end position="142"/>
    </location>
</feature>
<feature type="binding site" description="distal binding residue">
    <location>
        <position position="59"/>
    </location>
    <ligand>
        <name>heme b</name>
        <dbReference type="ChEBI" id="CHEBI:60344"/>
    </ligand>
    <ligandPart>
        <name>Fe</name>
        <dbReference type="ChEBI" id="CHEBI:18248"/>
    </ligandPart>
</feature>
<feature type="binding site" description="proximal binding residue">
    <location>
        <position position="88"/>
    </location>
    <ligand>
        <name>heme b</name>
        <dbReference type="ChEBI" id="CHEBI:60344"/>
    </ligand>
    <ligandPart>
        <name>Fe</name>
        <dbReference type="ChEBI" id="CHEBI:18248"/>
    </ligandPart>
</feature>
<feature type="sequence conflict" description="In Ref. 2; AA sequence." evidence="4" ref="2">
    <original>Q</original>
    <variation>E</variation>
    <location>
        <position position="83"/>
    </location>
</feature>
<keyword id="KW-0903">Direct protein sequencing</keyword>
<keyword id="KW-0349">Heme</keyword>
<keyword id="KW-0408">Iron</keyword>
<keyword id="KW-0479">Metal-binding</keyword>
<keyword id="KW-0561">Oxygen transport</keyword>
<keyword id="KW-1185">Reference proteome</keyword>
<keyword id="KW-0813">Transport</keyword>
<gene>
    <name type="primary">HBBC</name>
</gene>
<reference key="1">
    <citation type="journal article" date="1989" name="J. Mol. Evol.">
        <title>A comparison of the beta A- and beta B-globin gene clusters of sheep.</title>
        <authorList>
            <person name="Garner K.J."/>
            <person name="Lingrel J.B."/>
        </authorList>
    </citation>
    <scope>NUCLEOTIDE SEQUENCE [GENOMIC DNA]</scope>
</reference>
<reference key="2">
    <citation type="journal article" date="1966" name="Arch. Biochem. Biophys.">
        <title>The structure of sheep hemoglobins. II. The amino acid composition of the tryptic peptides of the non-alpha chains of hemoglobins A, B, C, and F.</title>
        <authorList>
            <person name="Wilson J.B."/>
            <person name="Edwards W.C."/>
            <person name="McDaniel M."/>
            <person name="Dobbs M.M."/>
            <person name="Huisman T.H.J."/>
        </authorList>
    </citation>
    <scope>PROTEIN SEQUENCE OF 2-142</scope>
    <source>
        <strain>Rambouillet</strain>
    </source>
</reference>
<reference key="3">
    <citation type="journal article" date="1967" name="J. Biol. Chem.">
        <title>Differences in the amino acid sequences of tryptic peptides from three sheep hemoglobin beta chains.</title>
        <authorList>
            <person name="Boyer S.H."/>
            <person name="Hathaway P."/>
            <person name="Pascasio F."/>
            <person name="Bordley J."/>
            <person name="Orton C."/>
            <person name="Naughton M.A."/>
        </authorList>
    </citation>
    <scope>PROTEIN SEQUENCE OF 2-142</scope>
    <source>
        <strain>Dorset</strain>
    </source>
</reference>
<name>HBBC_SHEEP</name>
<dbReference type="EMBL" id="X14728">
    <property type="protein sequence ID" value="CAA32850.1"/>
    <property type="molecule type" value="Genomic_DNA"/>
</dbReference>
<dbReference type="PIR" id="S10074">
    <property type="entry name" value="HBSHC"/>
</dbReference>
<dbReference type="RefSeq" id="NP_001106896.1">
    <property type="nucleotide sequence ID" value="NM_001113425.1"/>
</dbReference>
<dbReference type="SMR" id="P68056"/>
<dbReference type="GeneID" id="100134870"/>
<dbReference type="KEGG" id="oas:100134870"/>
<dbReference type="OrthoDB" id="9886081at2759"/>
<dbReference type="Proteomes" id="UP000002356">
    <property type="component" value="Unplaced"/>
</dbReference>
<dbReference type="GO" id="GO:0072562">
    <property type="term" value="C:blood microparticle"/>
    <property type="evidence" value="ECO:0007669"/>
    <property type="project" value="TreeGrafter"/>
</dbReference>
<dbReference type="GO" id="GO:0031838">
    <property type="term" value="C:haptoglobin-hemoglobin complex"/>
    <property type="evidence" value="ECO:0007669"/>
    <property type="project" value="TreeGrafter"/>
</dbReference>
<dbReference type="GO" id="GO:0005833">
    <property type="term" value="C:hemoglobin complex"/>
    <property type="evidence" value="ECO:0007669"/>
    <property type="project" value="InterPro"/>
</dbReference>
<dbReference type="GO" id="GO:0031720">
    <property type="term" value="F:haptoglobin binding"/>
    <property type="evidence" value="ECO:0007669"/>
    <property type="project" value="TreeGrafter"/>
</dbReference>
<dbReference type="GO" id="GO:0020037">
    <property type="term" value="F:heme binding"/>
    <property type="evidence" value="ECO:0007669"/>
    <property type="project" value="InterPro"/>
</dbReference>
<dbReference type="GO" id="GO:0031721">
    <property type="term" value="F:hemoglobin alpha binding"/>
    <property type="evidence" value="ECO:0007669"/>
    <property type="project" value="TreeGrafter"/>
</dbReference>
<dbReference type="GO" id="GO:0046872">
    <property type="term" value="F:metal ion binding"/>
    <property type="evidence" value="ECO:0007669"/>
    <property type="project" value="UniProtKB-KW"/>
</dbReference>
<dbReference type="GO" id="GO:0043177">
    <property type="term" value="F:organic acid binding"/>
    <property type="evidence" value="ECO:0007669"/>
    <property type="project" value="TreeGrafter"/>
</dbReference>
<dbReference type="GO" id="GO:0019825">
    <property type="term" value="F:oxygen binding"/>
    <property type="evidence" value="ECO:0007669"/>
    <property type="project" value="InterPro"/>
</dbReference>
<dbReference type="GO" id="GO:0005344">
    <property type="term" value="F:oxygen carrier activity"/>
    <property type="evidence" value="ECO:0007669"/>
    <property type="project" value="UniProtKB-KW"/>
</dbReference>
<dbReference type="GO" id="GO:0004601">
    <property type="term" value="F:peroxidase activity"/>
    <property type="evidence" value="ECO:0007669"/>
    <property type="project" value="TreeGrafter"/>
</dbReference>
<dbReference type="GO" id="GO:0042744">
    <property type="term" value="P:hydrogen peroxide catabolic process"/>
    <property type="evidence" value="ECO:0007669"/>
    <property type="project" value="TreeGrafter"/>
</dbReference>
<dbReference type="CDD" id="cd08925">
    <property type="entry name" value="Hb-beta-like"/>
    <property type="match status" value="1"/>
</dbReference>
<dbReference type="FunFam" id="1.10.490.10:FF:000001">
    <property type="entry name" value="Hemoglobin subunit beta"/>
    <property type="match status" value="1"/>
</dbReference>
<dbReference type="Gene3D" id="1.10.490.10">
    <property type="entry name" value="Globins"/>
    <property type="match status" value="1"/>
</dbReference>
<dbReference type="InterPro" id="IPR000971">
    <property type="entry name" value="Globin"/>
</dbReference>
<dbReference type="InterPro" id="IPR009050">
    <property type="entry name" value="Globin-like_sf"/>
</dbReference>
<dbReference type="InterPro" id="IPR012292">
    <property type="entry name" value="Globin/Proto"/>
</dbReference>
<dbReference type="InterPro" id="IPR002337">
    <property type="entry name" value="Hemoglobin_b"/>
</dbReference>
<dbReference type="InterPro" id="IPR050056">
    <property type="entry name" value="Hemoglobin_oxygen_transport"/>
</dbReference>
<dbReference type="PANTHER" id="PTHR11442">
    <property type="entry name" value="HEMOGLOBIN FAMILY MEMBER"/>
    <property type="match status" value="1"/>
</dbReference>
<dbReference type="PANTHER" id="PTHR11442:SF42">
    <property type="entry name" value="HEMOGLOBIN SUBUNIT BETA"/>
    <property type="match status" value="1"/>
</dbReference>
<dbReference type="Pfam" id="PF00042">
    <property type="entry name" value="Globin"/>
    <property type="match status" value="1"/>
</dbReference>
<dbReference type="PRINTS" id="PR00814">
    <property type="entry name" value="BETAHAEM"/>
</dbReference>
<dbReference type="SUPFAM" id="SSF46458">
    <property type="entry name" value="Globin-like"/>
    <property type="match status" value="1"/>
</dbReference>
<dbReference type="PROSITE" id="PS01033">
    <property type="entry name" value="GLOBIN"/>
    <property type="match status" value="1"/>
</dbReference>
<comment type="function">
    <text>Involved in oxygen transport from the lung to the various peripheral tissues.</text>
</comment>
<comment type="subunit">
    <text>Heterotetramer of two alpha chains and two beta chains.</text>
</comment>
<comment type="tissue specificity">
    <text>Red blood cells.</text>
</comment>
<comment type="miscellaneous">
    <text>This type of beta-C chain is found when anemia has been experimentally produced.</text>
</comment>
<comment type="similarity">
    <text evidence="1">Belongs to the globin family.</text>
</comment>
<sequence>MPNKALITGFWSKVKVDEVGAEALGRLLVVYPWTQRFFEHFGDLSTADAVLGNAKVKAHGKKVLDSFSNGVQHLDDLKGTFAQLSELHCDKLHVDPENFRLLGNVLVVVLARHFGKEFTPELQAEFQKVVAGVASALAHRYH</sequence>